<proteinExistence type="inferred from homology"/>
<evidence type="ECO:0000255" key="1">
    <source>
        <dbReference type="HAMAP-Rule" id="MF_00185"/>
    </source>
</evidence>
<reference key="1">
    <citation type="journal article" date="2007" name="PLoS ONE">
        <title>Complete genomic characterization of a pathogenic A.II strain of Francisella tularensis subspecies tularensis.</title>
        <authorList>
            <person name="Beckstrom-Sternberg S.M."/>
            <person name="Auerbach R.K."/>
            <person name="Godbole S."/>
            <person name="Pearson J.V."/>
            <person name="Beckstrom-Sternberg J.S."/>
            <person name="Deng Z."/>
            <person name="Munk C."/>
            <person name="Kubota K."/>
            <person name="Zhou Y."/>
            <person name="Bruce D."/>
            <person name="Noronha J."/>
            <person name="Scheuermann R.H."/>
            <person name="Wang A."/>
            <person name="Wei X."/>
            <person name="Wang J."/>
            <person name="Hao J."/>
            <person name="Wagner D.M."/>
            <person name="Brettin T.S."/>
            <person name="Brown N."/>
            <person name="Gilna P."/>
            <person name="Keim P.S."/>
        </authorList>
    </citation>
    <scope>NUCLEOTIDE SEQUENCE [LARGE SCALE GENOMIC DNA]</scope>
    <source>
        <strain>WY96-3418</strain>
    </source>
</reference>
<keyword id="KW-0067">ATP-binding</keyword>
<keyword id="KW-0460">Magnesium</keyword>
<keyword id="KW-0547">Nucleotide-binding</keyword>
<keyword id="KW-0808">Transferase</keyword>
<keyword id="KW-0819">tRNA processing</keyword>
<comment type="function">
    <text evidence="1">Catalyzes the transfer of a dimethylallyl group onto the adenine at position 37 in tRNAs that read codons beginning with uridine, leading to the formation of N6-(dimethylallyl)adenosine (i(6)A).</text>
</comment>
<comment type="catalytic activity">
    <reaction evidence="1">
        <text>adenosine(37) in tRNA + dimethylallyl diphosphate = N(6)-dimethylallyladenosine(37) in tRNA + diphosphate</text>
        <dbReference type="Rhea" id="RHEA:26482"/>
        <dbReference type="Rhea" id="RHEA-COMP:10162"/>
        <dbReference type="Rhea" id="RHEA-COMP:10375"/>
        <dbReference type="ChEBI" id="CHEBI:33019"/>
        <dbReference type="ChEBI" id="CHEBI:57623"/>
        <dbReference type="ChEBI" id="CHEBI:74411"/>
        <dbReference type="ChEBI" id="CHEBI:74415"/>
        <dbReference type="EC" id="2.5.1.75"/>
    </reaction>
</comment>
<comment type="cofactor">
    <cofactor evidence="1">
        <name>Mg(2+)</name>
        <dbReference type="ChEBI" id="CHEBI:18420"/>
    </cofactor>
</comment>
<comment type="subunit">
    <text evidence="1">Monomer.</text>
</comment>
<comment type="similarity">
    <text evidence="1">Belongs to the IPP transferase family.</text>
</comment>
<feature type="chain" id="PRO_1000020603" description="tRNA dimethylallyltransferase">
    <location>
        <begin position="1"/>
        <end position="308"/>
    </location>
</feature>
<feature type="region of interest" description="Interaction with substrate tRNA" evidence="1">
    <location>
        <begin position="35"/>
        <end position="38"/>
    </location>
</feature>
<feature type="region of interest" description="Interaction with substrate tRNA" evidence="1">
    <location>
        <begin position="159"/>
        <end position="163"/>
    </location>
</feature>
<feature type="binding site" evidence="1">
    <location>
        <begin position="10"/>
        <end position="17"/>
    </location>
    <ligand>
        <name>ATP</name>
        <dbReference type="ChEBI" id="CHEBI:30616"/>
    </ligand>
</feature>
<feature type="binding site" evidence="1">
    <location>
        <begin position="12"/>
        <end position="17"/>
    </location>
    <ligand>
        <name>substrate</name>
    </ligand>
</feature>
<feature type="site" description="Interaction with substrate tRNA" evidence="1">
    <location>
        <position position="101"/>
    </location>
</feature>
<feature type="site" description="Interaction with substrate tRNA" evidence="1">
    <location>
        <position position="123"/>
    </location>
</feature>
<accession>A4IYB1</accession>
<dbReference type="EC" id="2.5.1.75" evidence="1"/>
<dbReference type="EMBL" id="CP000608">
    <property type="protein sequence ID" value="ABO46912.1"/>
    <property type="molecule type" value="Genomic_DNA"/>
</dbReference>
<dbReference type="RefSeq" id="WP_003015652.1">
    <property type="nucleotide sequence ID" value="NC_009257.1"/>
</dbReference>
<dbReference type="SMR" id="A4IYB1"/>
<dbReference type="KEGG" id="ftw:FTW_1100"/>
<dbReference type="HOGENOM" id="CLU_032616_0_0_6"/>
<dbReference type="GO" id="GO:0005524">
    <property type="term" value="F:ATP binding"/>
    <property type="evidence" value="ECO:0007669"/>
    <property type="project" value="UniProtKB-UniRule"/>
</dbReference>
<dbReference type="GO" id="GO:0052381">
    <property type="term" value="F:tRNA dimethylallyltransferase activity"/>
    <property type="evidence" value="ECO:0007669"/>
    <property type="project" value="UniProtKB-UniRule"/>
</dbReference>
<dbReference type="GO" id="GO:0006400">
    <property type="term" value="P:tRNA modification"/>
    <property type="evidence" value="ECO:0007669"/>
    <property type="project" value="TreeGrafter"/>
</dbReference>
<dbReference type="FunFam" id="1.10.20.140:FF:000001">
    <property type="entry name" value="tRNA dimethylallyltransferase"/>
    <property type="match status" value="1"/>
</dbReference>
<dbReference type="Gene3D" id="1.10.20.140">
    <property type="match status" value="1"/>
</dbReference>
<dbReference type="Gene3D" id="3.40.50.300">
    <property type="entry name" value="P-loop containing nucleotide triphosphate hydrolases"/>
    <property type="match status" value="1"/>
</dbReference>
<dbReference type="HAMAP" id="MF_00185">
    <property type="entry name" value="IPP_trans"/>
    <property type="match status" value="1"/>
</dbReference>
<dbReference type="InterPro" id="IPR039657">
    <property type="entry name" value="Dimethylallyltransferase"/>
</dbReference>
<dbReference type="InterPro" id="IPR018022">
    <property type="entry name" value="IPT"/>
</dbReference>
<dbReference type="InterPro" id="IPR027417">
    <property type="entry name" value="P-loop_NTPase"/>
</dbReference>
<dbReference type="NCBIfam" id="TIGR00174">
    <property type="entry name" value="miaA"/>
    <property type="match status" value="1"/>
</dbReference>
<dbReference type="PANTHER" id="PTHR11088">
    <property type="entry name" value="TRNA DIMETHYLALLYLTRANSFERASE"/>
    <property type="match status" value="1"/>
</dbReference>
<dbReference type="PANTHER" id="PTHR11088:SF60">
    <property type="entry name" value="TRNA DIMETHYLALLYLTRANSFERASE"/>
    <property type="match status" value="1"/>
</dbReference>
<dbReference type="Pfam" id="PF01715">
    <property type="entry name" value="IPPT"/>
    <property type="match status" value="1"/>
</dbReference>
<dbReference type="SUPFAM" id="SSF52540">
    <property type="entry name" value="P-loop containing nucleoside triphosphate hydrolases"/>
    <property type="match status" value="1"/>
</dbReference>
<gene>
    <name evidence="1" type="primary">miaA</name>
    <name type="ordered locus">FTW_1100</name>
</gene>
<sequence>MSKLIYGLAGPTASGKTSLSILLAKKINAEIISVDSSLVYKGMDIGTAKPTLQEQDGIKHHLIDIIEPTGNFSVADFISSVNKLKKEIWARGREVLLVGGTMLYFKGLIEGLSALPESQAEIREALEYQKKAKGLQYLHQQLNEIDPQSAQKINPNDQQRIFRALEVIMISGKKYSELVKTSKVGGLDEDLKLCALVPNDRSILHKNIESRFRQMLDQGFLDEVQNLHKNPMLTKETTAIRSVGYRQAWEYLDGDISYDEFVKKGIVATRQLAKRQLTWIRNWQSSINIVAMENETKELDILKYFGYK</sequence>
<protein>
    <recommendedName>
        <fullName evidence="1">tRNA dimethylallyltransferase</fullName>
        <ecNumber evidence="1">2.5.1.75</ecNumber>
    </recommendedName>
    <alternativeName>
        <fullName evidence="1">Dimethylallyl diphosphate:tRNA dimethylallyltransferase</fullName>
        <shortName evidence="1">DMAPP:tRNA dimethylallyltransferase</shortName>
        <shortName evidence="1">DMATase</shortName>
    </alternativeName>
    <alternativeName>
        <fullName evidence="1">Isopentenyl-diphosphate:tRNA isopentenyltransferase</fullName>
        <shortName evidence="1">IPP transferase</shortName>
        <shortName evidence="1">IPPT</shortName>
        <shortName evidence="1">IPTase</shortName>
    </alternativeName>
</protein>
<organism>
    <name type="scientific">Francisella tularensis subsp. tularensis (strain WY96-3418)</name>
    <dbReference type="NCBI Taxonomy" id="418136"/>
    <lineage>
        <taxon>Bacteria</taxon>
        <taxon>Pseudomonadati</taxon>
        <taxon>Pseudomonadota</taxon>
        <taxon>Gammaproteobacteria</taxon>
        <taxon>Thiotrichales</taxon>
        <taxon>Francisellaceae</taxon>
        <taxon>Francisella</taxon>
    </lineage>
</organism>
<name>MIAA_FRATW</name>